<proteinExistence type="evidence at protein level"/>
<protein>
    <recommendedName>
        <fullName evidence="5">Nemertide alpha-1</fullName>
    </recommendedName>
</protein>
<accession>P0DQS1</accession>
<organism>
    <name type="scientific">Lineus lacteus</name>
    <name type="common">Ribbon worm</name>
    <name type="synonym">Ramphogordius lacteus</name>
    <dbReference type="NCBI Taxonomy" id="947578"/>
    <lineage>
        <taxon>Eukaryota</taxon>
        <taxon>Metazoa</taxon>
        <taxon>Spiralia</taxon>
        <taxon>Lophotrochozoa</taxon>
        <taxon>Nemertea</taxon>
        <taxon>Pilidiophora</taxon>
        <taxon>Heteronemertea</taxon>
        <taxon>Lineidae</taxon>
        <taxon>Lineus</taxon>
    </lineage>
</organism>
<reference key="1">
    <citation type="journal article" date="2018" name="Sci. Rep.">
        <title>Peptide ion channel toxins from the bootlace worm, the longest animal on Earth.</title>
        <authorList>
            <person name="Jacobsson E."/>
            <person name="Andersson H.S."/>
            <person name="Strand M."/>
            <person name="Peigneur S."/>
            <person name="Eriksson C."/>
            <person name="Loden H."/>
            <person name="Shariatgorji M."/>
            <person name="Andren P.E."/>
            <person name="Lebbe E.K.M."/>
            <person name="Rosengren K.J."/>
            <person name="Tytgat J."/>
            <person name="Goeransson U."/>
        </authorList>
    </citation>
    <scope>NUCLEOTIDE SEQUENCE [MRNA]</scope>
    <scope>FUNCTION</scope>
    <scope>MASS SPECTROMETRY</scope>
    <scope>HYDROXYLATION AT PRO-72 AND PRO-73</scope>
    <scope>SYNTHESIS OF 45-75</scope>
    <scope>BIOASSAY</scope>
</reference>
<reference key="2">
    <citation type="journal article" date="2021" name="J. Nat. Prod.">
        <title>Functional characterization of the nemertide alpha family of peptide toxins.</title>
        <authorList>
            <person name="Jacobsson E."/>
            <person name="Peigneur S."/>
            <person name="Andersson H.S."/>
            <person name="Laborde Q."/>
            <person name="Strand M."/>
            <person name="Tytgat J."/>
            <person name="Goeransson U."/>
        </authorList>
    </citation>
    <scope>NUCLEOTIDE SEQUENCE [MRNA]</scope>
    <scope>SYNTHESIS OF 45-75</scope>
    <scope>FUNCTION</scope>
</reference>
<reference key="3">
    <citation type="journal article" date="2020" name="Front. Cardiovasc. Med.">
        <title>Compound heterozygous SCN5A mutations in severe sodium channelopathy with Brugada syndrome: a case report.</title>
        <authorList>
            <person name="Nijak A."/>
            <person name="Labro A.J."/>
            <person name="De Wilde H."/>
            <person name="Dewals W."/>
            <person name="Peigneur S."/>
            <person name="Tytgat J."/>
            <person name="Snyders D."/>
            <person name="Sieliwonczyk E."/>
            <person name="Simons E."/>
            <person name="Van Craenenbroeck E."/>
            <person name="Schepers D."/>
            <person name="Van Laer L."/>
            <person name="Saenen J."/>
            <person name="Loeys B."/>
            <person name="Alaerts M."/>
        </authorList>
    </citation>
    <scope>EFFECT IN BRUGADA SYNDROME 1</scope>
    <scope>SYNTHESIS OF 45-75</scope>
</reference>
<comment type="function">
    <text evidence="2 3 4">Highly potent toxin against insect sodium channel (Nav) and with less potent activity against mammalian sodium channels (PubMed:29567943). Potently inhibits inactivation of insect sodium channels of B.germanica (BgNav1) (EC(50)=8.6 nM), D.melanogaster (Dm Nav1), and arachnid sodium channel V.destructor (VdNav1) (PubMed:29567943, PubMed:34445875). Also delays the inactivation of most mammalian Nav channels tested (human Nav1.1/SCN1A; EC(50)=124.1 nM, rat Nav1.2/SCN2A; EC(50)=359.6 nM, rat Nav1.3/SCN3A; EC(50)=135.4 nM, rat Nav1.4/SCN4A; EC(50)=145.5 nM, human Nav1.5/SCN5A; EC(50)=138.3 nM, mouse Nav1.6/SCN8A; EC(50)=240.4 nM, human Nav1.9/SCN9A; EC(50)=76.5 nM) (PubMed:29567943, PubMed:34445875). 1 uM is enough to completely inhibits the inactivation, resulting in sustained non-inactivating currents (PubMed:29567943). In addition, the toxin significantly enhances the recovery from inactivation, and the open state is not required for the toxin to interact with the channel (PubMed:29567943). In vivo, injection into green crabs (Carcinus maenas at 1 mug/kg) of small doses (1-5 ug/kg) results in slow and fast permanent paralysis, whereas injection of high doses (more than 10 ug/kg) causes death (PubMed:29567943). Injection into juvenile Blaptica dubia cockroaches results in death or permanent paralysis at doses higher than 7.1 ug/kg (PubMed:29567943). Injection into brine shrimp (Artemia salina) stops movement or causes death after 24 hours (EC(50)=0.3 uM) (PubMed:34445875). In the rare inherited cardiac arrhythmia Brugada syndrome 1 (BRGDA1), this toxin is able to restore the loss of function by reducing channel inactivation, without affecting activation, by binding to Nav1.5/SCN5A (PubMed:32850980).</text>
</comment>
<comment type="subcellular location">
    <subcellularLocation>
        <location evidence="7">Secreted</location>
    </subcellularLocation>
</comment>
<comment type="tissue specificity">
    <text evidence="2">Confined to the epidermis and to the mucus layer.</text>
</comment>
<comment type="domain">
    <text evidence="7">The presence of a 'disulfide through disulfide knot' structurally defines this protein as a knottin.</text>
</comment>
<comment type="mass spectrometry"/>
<comment type="miscellaneous">
    <text evidence="2 4">Negative results: does not show effect on both human and rat Nav1.8/SCN10A.</text>
</comment>
<comment type="miscellaneous">
    <text evidence="6">The primary and 3D structures of the mature peptide is identical to that of Nemertide alpha-1 from Lineus longissimus (AC P0DM24). Links to the 3D-structure (PDB=6ENA) is available in this entry.</text>
</comment>
<comment type="similarity">
    <text evidence="6">Belongs to the nemertide family.</text>
</comment>
<name>NEMA1_LINLC</name>
<evidence type="ECO:0000255" key="1"/>
<evidence type="ECO:0000269" key="2">
    <source>
    </source>
</evidence>
<evidence type="ECO:0000269" key="3">
    <source>
    </source>
</evidence>
<evidence type="ECO:0000269" key="4">
    <source>
    </source>
</evidence>
<evidence type="ECO:0000303" key="5">
    <source>
    </source>
</evidence>
<evidence type="ECO:0000305" key="6"/>
<evidence type="ECO:0000305" key="7">
    <source>
    </source>
</evidence>
<evidence type="ECO:0000305" key="8">
    <source>
    </source>
</evidence>
<sequence>YRIASSSIAKMKTAVFLVGLLFLGLVFADEAAIDSEFDQSIDKRGCIATGSFCTLSKGCCTKNCGWNFKCNPPNQK</sequence>
<feature type="signal peptide" evidence="1">
    <location>
        <begin position="1" status="less than"/>
        <end position="28"/>
    </location>
</feature>
<feature type="propeptide" id="PRO_0000454420" evidence="7">
    <location>
        <begin position="29"/>
        <end position="44"/>
    </location>
</feature>
<feature type="chain" id="PRO_0000454421" description="Nemertide alpha-1" evidence="2">
    <location>
        <begin position="45"/>
        <end position="75"/>
    </location>
</feature>
<feature type="site" description="Hydrophobic/aromatic residue important for potent activity" evidence="8">
    <location>
        <position position="52"/>
    </location>
</feature>
<feature type="modified residue" description="4-hydroxyproline" evidence="2">
    <location>
        <position position="72"/>
    </location>
</feature>
<feature type="modified residue" description="4-hydroxyproline" evidence="2">
    <location>
        <position position="73"/>
    </location>
</feature>
<feature type="disulfide bond" evidence="2">
    <location>
        <begin position="46"/>
        <end position="60"/>
    </location>
</feature>
<feature type="disulfide bond" evidence="2">
    <location>
        <begin position="53"/>
        <end position="64"/>
    </location>
</feature>
<feature type="disulfide bond" evidence="2">
    <location>
        <begin position="59"/>
        <end position="70"/>
    </location>
</feature>
<feature type="non-terminal residue">
    <location>
        <position position="1"/>
    </location>
</feature>
<keyword id="KW-0165">Cleavage on pair of basic residues</keyword>
<keyword id="KW-1015">Disulfide bond</keyword>
<keyword id="KW-0379">Hydroxylation</keyword>
<keyword id="KW-0872">Ion channel impairing toxin</keyword>
<keyword id="KW-0960">Knottin</keyword>
<keyword id="KW-0528">Neurotoxin</keyword>
<keyword id="KW-0964">Secreted</keyword>
<keyword id="KW-0732">Signal</keyword>
<keyword id="KW-0800">Toxin</keyword>
<keyword id="KW-0738">Voltage-gated sodium channel impairing toxin</keyword>
<dbReference type="SMR" id="P0DQS1"/>
<dbReference type="GO" id="GO:0005576">
    <property type="term" value="C:extracellular region"/>
    <property type="evidence" value="ECO:0007669"/>
    <property type="project" value="UniProtKB-SubCell"/>
</dbReference>
<dbReference type="GO" id="GO:0017080">
    <property type="term" value="F:sodium channel regulator activity"/>
    <property type="evidence" value="ECO:0007669"/>
    <property type="project" value="UniProtKB-KW"/>
</dbReference>
<dbReference type="GO" id="GO:0090729">
    <property type="term" value="F:toxin activity"/>
    <property type="evidence" value="ECO:0007669"/>
    <property type="project" value="UniProtKB-KW"/>
</dbReference>